<accession>Q9ZSR8</accession>
<name>RSSA_BRANA</name>
<organism>
    <name type="scientific">Brassica napus</name>
    <name type="common">Rape</name>
    <dbReference type="NCBI Taxonomy" id="3708"/>
    <lineage>
        <taxon>Eukaryota</taxon>
        <taxon>Viridiplantae</taxon>
        <taxon>Streptophyta</taxon>
        <taxon>Embryophyta</taxon>
        <taxon>Tracheophyta</taxon>
        <taxon>Spermatophyta</taxon>
        <taxon>Magnoliopsida</taxon>
        <taxon>eudicotyledons</taxon>
        <taxon>Gunneridae</taxon>
        <taxon>Pentapetalae</taxon>
        <taxon>rosids</taxon>
        <taxon>malvids</taxon>
        <taxon>Brassicales</taxon>
        <taxon>Brassicaceae</taxon>
        <taxon>Brassiceae</taxon>
        <taxon>Brassica</taxon>
    </lineage>
</organism>
<keyword id="KW-0963">Cytoplasm</keyword>
<keyword id="KW-0687">Ribonucleoprotein</keyword>
<keyword id="KW-0689">Ribosomal protein</keyword>
<sequence length="292" mass="32030">MAANGSTQLSQKEADIKMMCAAEVHLGTKNCNYQMERYVFKRRNDGIYIFNLGKTWEKLMMAARVIVAIENPQDIIVQSARPYGQRAVLKFAQYTGANAIAGRHTPGTFTNQMQTSFSEPRLLILTDPRTDHQPIKEGALGNIPIIAFCDTDSPMRFVDIGIPANNKGKHSIGCLFWLLARMVLQMRGTIRPAQKWDVMVDLFFYREPEETKPEDEDEVAPQAEFGLPAPEYGGGDQWTTAAIPDAAWPGEAQAPISAAPAAGSWNDSAAPAAAEGGWDAAVPPTTAVTNWE</sequence>
<gene>
    <name type="primary">LRP</name>
</gene>
<protein>
    <recommendedName>
        <fullName evidence="1">Small ribosomal subunit protein uS2</fullName>
    </recommendedName>
    <alternativeName>
        <fullName evidence="3">40S ribosomal protein SA</fullName>
    </alternativeName>
    <alternativeName>
        <fullName>Laminin receptor-like protein</fullName>
    </alternativeName>
    <alternativeName>
        <fullName>p40</fullName>
    </alternativeName>
</protein>
<evidence type="ECO:0000255" key="1">
    <source>
        <dbReference type="HAMAP-Rule" id="MF_03015"/>
    </source>
</evidence>
<evidence type="ECO:0000256" key="2">
    <source>
        <dbReference type="SAM" id="MobiDB-lite"/>
    </source>
</evidence>
<evidence type="ECO:0000305" key="3"/>
<reference key="1">
    <citation type="online journal article" date="1998" name="Plant Gene Register">
        <title>Isolation and sequence analysis of a cDNA Encoding a ribosome-associated p40 protein from a cell suspension culture of Brassica napus L. cv Jet Neuf.</title>
        <authorList>
            <person name="Nykiforuk C.L."/>
            <person name="Huff P.W."/>
            <person name="Taylor D.C."/>
            <person name="Zou J.T."/>
            <person name="Laroche A."/>
            <person name="Weselake R.J."/>
        </authorList>
        <locator>PGR98-216</locator>
    </citation>
    <scope>NUCLEOTIDE SEQUENCE [MRNA]</scope>
    <source>
        <strain>cv. Jet neuf</strain>
    </source>
</reference>
<dbReference type="EMBL" id="AF097522">
    <property type="protein sequence ID" value="AAC97937.1"/>
    <property type="molecule type" value="mRNA"/>
</dbReference>
<dbReference type="RefSeq" id="NP_001302623.1">
    <property type="nucleotide sequence ID" value="NM_001315694.1"/>
</dbReference>
<dbReference type="SMR" id="Q9ZSR8"/>
<dbReference type="EnsemblPlants" id="CDX96403">
    <property type="protein sequence ID" value="CDX96403"/>
    <property type="gene ID" value="GSBRNA2T00102561001"/>
</dbReference>
<dbReference type="GeneID" id="106354211"/>
<dbReference type="Gramene" id="CDX96403">
    <property type="protein sequence ID" value="CDX96403"/>
    <property type="gene ID" value="GSBRNA2T00102561001"/>
</dbReference>
<dbReference type="KEGG" id="bna:106354211"/>
<dbReference type="OMA" id="QCHLGAK"/>
<dbReference type="OrthoDB" id="414863at2759"/>
<dbReference type="GO" id="GO:0022627">
    <property type="term" value="C:cytosolic small ribosomal subunit"/>
    <property type="evidence" value="ECO:0007669"/>
    <property type="project" value="UniProtKB-UniRule"/>
</dbReference>
<dbReference type="GO" id="GO:0003735">
    <property type="term" value="F:structural constituent of ribosome"/>
    <property type="evidence" value="ECO:0007669"/>
    <property type="project" value="UniProtKB-UniRule"/>
</dbReference>
<dbReference type="GO" id="GO:0000028">
    <property type="term" value="P:ribosomal small subunit assembly"/>
    <property type="evidence" value="ECO:0007669"/>
    <property type="project" value="UniProtKB-UniRule"/>
</dbReference>
<dbReference type="GO" id="GO:0006412">
    <property type="term" value="P:translation"/>
    <property type="evidence" value="ECO:0007669"/>
    <property type="project" value="UniProtKB-UniRule"/>
</dbReference>
<dbReference type="CDD" id="cd01425">
    <property type="entry name" value="RPS2"/>
    <property type="match status" value="1"/>
</dbReference>
<dbReference type="FunFam" id="3.40.50.10490:FF:000017">
    <property type="entry name" value="40S ribosomal protein SA"/>
    <property type="match status" value="1"/>
</dbReference>
<dbReference type="Gene3D" id="3.40.50.10490">
    <property type="entry name" value="Glucose-6-phosphate isomerase like protein, domain 1"/>
    <property type="match status" value="1"/>
</dbReference>
<dbReference type="HAMAP" id="MF_03015">
    <property type="entry name" value="Ribosomal_S2_euk"/>
    <property type="match status" value="1"/>
</dbReference>
<dbReference type="InterPro" id="IPR001865">
    <property type="entry name" value="Ribosomal_uS2"/>
</dbReference>
<dbReference type="InterPro" id="IPR018130">
    <property type="entry name" value="Ribosomal_uS2_CS"/>
</dbReference>
<dbReference type="InterPro" id="IPR027498">
    <property type="entry name" value="Ribosomal_uS2_euk"/>
</dbReference>
<dbReference type="InterPro" id="IPR005707">
    <property type="entry name" value="Ribosomal_uS2_euk/arc"/>
</dbReference>
<dbReference type="InterPro" id="IPR023591">
    <property type="entry name" value="Ribosomal_uS2_flav_dom_sf"/>
</dbReference>
<dbReference type="NCBIfam" id="TIGR01012">
    <property type="entry name" value="uS2_euk_arch"/>
    <property type="match status" value="1"/>
</dbReference>
<dbReference type="PANTHER" id="PTHR11489">
    <property type="entry name" value="40S RIBOSOMAL PROTEIN SA"/>
    <property type="match status" value="1"/>
</dbReference>
<dbReference type="Pfam" id="PF00318">
    <property type="entry name" value="Ribosomal_S2"/>
    <property type="match status" value="2"/>
</dbReference>
<dbReference type="PRINTS" id="PR00395">
    <property type="entry name" value="RIBOSOMALS2"/>
</dbReference>
<dbReference type="SUPFAM" id="SSF52313">
    <property type="entry name" value="Ribosomal protein S2"/>
    <property type="match status" value="1"/>
</dbReference>
<dbReference type="PROSITE" id="PS00962">
    <property type="entry name" value="RIBOSOMAL_S2_1"/>
    <property type="match status" value="1"/>
</dbReference>
<dbReference type="PROSITE" id="PS00963">
    <property type="entry name" value="RIBOSOMAL_S2_2"/>
    <property type="match status" value="1"/>
</dbReference>
<comment type="function">
    <text evidence="1">Required for the assembly and/or stability of the 40S ribosomal subunit. Required for the processing of the 20S rRNA-precursor to mature 18S rRNA in a late step of the maturation of 40S ribosomal subunits.</text>
</comment>
<comment type="subunit">
    <text evidence="1">Component of the small ribosomal subunit. Mature ribosomes consist of a small (40S) and a large (60S) subunit. The 40S subunit contains about 33 different proteins and 1 molecule of RNA (18S). The 60S subunit contains about 49 different proteins and 3 molecules of RNA (25S, 5.8S and 5S). Interacts with ribosomal protein S21.</text>
</comment>
<comment type="subcellular location">
    <subcellularLocation>
        <location>Cytoplasm</location>
    </subcellularLocation>
</comment>
<comment type="similarity">
    <text evidence="1">Belongs to the universal ribosomal protein uS2 family.</text>
</comment>
<proteinExistence type="evidence at transcript level"/>
<feature type="chain" id="PRO_0000134348" description="Small ribosomal subunit protein uS2">
    <location>
        <begin position="1"/>
        <end position="292"/>
    </location>
</feature>
<feature type="region of interest" description="Disordered" evidence="2">
    <location>
        <begin position="256"/>
        <end position="292"/>
    </location>
</feature>
<feature type="compositionally biased region" description="Low complexity" evidence="2">
    <location>
        <begin position="269"/>
        <end position="281"/>
    </location>
</feature>